<reference key="1">
    <citation type="submission" date="2012-05" db="UniProtKB">
        <title>Novel peptides isolated from spider venom, and uses thereof.</title>
        <authorList>
            <person name="Meir A."/>
            <person name="Cherki R.S."/>
            <person name="Kolb E."/>
            <person name="Langut Y."/>
            <person name="Bajayo N."/>
        </authorList>
    </citation>
    <scope>PROTEIN SEQUENCE</scope>
    <scope>FUNCTION</scope>
    <scope>MASS SPECTROMETRY</scope>
    <scope>SUBCELLULAR LOCATION</scope>
    <source>
        <tissue>Venom</tissue>
    </source>
</reference>
<feature type="chain" id="PRO_0000419139" description="Beta-theraphotoxin-Hlv1a" evidence="2">
    <location>
        <begin position="1"/>
        <end position="35"/>
    </location>
</feature>
<feature type="disulfide bond" evidence="1">
    <location>
        <begin position="2"/>
        <end position="17"/>
    </location>
</feature>
<feature type="disulfide bond" evidence="1">
    <location>
        <begin position="9"/>
        <end position="24"/>
    </location>
</feature>
<feature type="disulfide bond" evidence="1">
    <location>
        <begin position="16"/>
        <end position="31"/>
    </location>
</feature>
<evidence type="ECO:0000250" key="1">
    <source>
        <dbReference type="UniProtKB" id="D2Y1X6"/>
    </source>
</evidence>
<evidence type="ECO:0000269" key="2">
    <source ref="1"/>
</evidence>
<evidence type="ECO:0000303" key="3">
    <source ref="1"/>
</evidence>
<evidence type="ECO:0000305" key="4"/>
<evidence type="ECO:0000305" key="5">
    <source ref="1"/>
</evidence>
<protein>
    <recommendedName>
        <fullName>Beta-theraphotoxin-Hlv1a</fullName>
        <shortName>Beta-TRTX-Hlv1a</shortName>
    </recommendedName>
    <alternativeName>
        <fullName evidence="3">Beta-theraphotoxin-Hl1a</fullName>
        <shortName evidence="3">Beta-TRTX-Hl1a</shortName>
    </alternativeName>
    <alternativeName>
        <fullName evidence="3">Haplotoxin-1</fullName>
    </alternativeName>
</protein>
<comment type="function">
    <text evidence="2">Spider venom neurotoxin that blocks voltage-gated sodium channel Nav1.3/SCN3A in human (IC(50)=1 uM) and rat (IC(50)=1 uM).</text>
</comment>
<comment type="subcellular location">
    <subcellularLocation>
        <location evidence="2">Secreted</location>
    </subcellularLocation>
</comment>
<comment type="tissue specificity">
    <text evidence="5">Expressed by the venom gland.</text>
</comment>
<comment type="domain">
    <text evidence="1">The presence of a 'disulfide through disulfide knot' structurally defines this protein as a knottin.</text>
</comment>
<comment type="mass spectrometry"/>
<comment type="miscellaneous">
    <text>Negative results: has no effect on human and rat Nav1.8/SCN10A. Has no effect on voltage-gated potassium channel human Kv11.1/KCNH2/ERG at 10 uM (Ref.1).</text>
</comment>
<comment type="similarity">
    <text evidence="4">Belongs to the neurotoxin 10 (Hwtx-1) family. 10 (haplotoxin-1) subfamily.</text>
</comment>
<keyword id="KW-0903">Direct protein sequencing</keyword>
<keyword id="KW-1015">Disulfide bond</keyword>
<keyword id="KW-0872">Ion channel impairing toxin</keyword>
<keyword id="KW-0960">Knottin</keyword>
<keyword id="KW-0528">Neurotoxin</keyword>
<keyword id="KW-0964">Secreted</keyword>
<keyword id="KW-0800">Toxin</keyword>
<keyword id="KW-0738">Voltage-gated sodium channel impairing toxin</keyword>
<proteinExistence type="evidence at protein level"/>
<sequence>ACLGFGEKCNPSNDKCCKSSSLVCSQKHKWCKYGW</sequence>
<dbReference type="SMR" id="B3EWN2"/>
<dbReference type="ArachnoServer" id="AS001583">
    <property type="toxin name" value="beta-theraphotoxin-Hlv1a"/>
</dbReference>
<dbReference type="GO" id="GO:0005576">
    <property type="term" value="C:extracellular region"/>
    <property type="evidence" value="ECO:0007669"/>
    <property type="project" value="UniProtKB-SubCell"/>
</dbReference>
<dbReference type="GO" id="GO:0008200">
    <property type="term" value="F:ion channel inhibitor activity"/>
    <property type="evidence" value="ECO:0007669"/>
    <property type="project" value="InterPro"/>
</dbReference>
<dbReference type="GO" id="GO:0017080">
    <property type="term" value="F:sodium channel regulator activity"/>
    <property type="evidence" value="ECO:0007669"/>
    <property type="project" value="UniProtKB-KW"/>
</dbReference>
<dbReference type="GO" id="GO:0090729">
    <property type="term" value="F:toxin activity"/>
    <property type="evidence" value="ECO:0007669"/>
    <property type="project" value="UniProtKB-KW"/>
</dbReference>
<dbReference type="InterPro" id="IPR011696">
    <property type="entry name" value="Huwentoxin-1"/>
</dbReference>
<dbReference type="InterPro" id="IPR013140">
    <property type="entry name" value="Huwentoxin_CS1"/>
</dbReference>
<dbReference type="Pfam" id="PF07740">
    <property type="entry name" value="Toxin_12"/>
    <property type="match status" value="1"/>
</dbReference>
<dbReference type="SUPFAM" id="SSF57059">
    <property type="entry name" value="omega toxin-like"/>
    <property type="match status" value="1"/>
</dbReference>
<dbReference type="PROSITE" id="PS60021">
    <property type="entry name" value="HWTX_1"/>
    <property type="match status" value="1"/>
</dbReference>
<name>HTX1_CYRLI</name>
<accession>B3EWN2</accession>
<organism>
    <name type="scientific">Cyriopagopus lividus</name>
    <name type="common">Cobalt blue tarantula</name>
    <name type="synonym">Haplopelma lividum</name>
    <dbReference type="NCBI Taxonomy" id="2053133"/>
    <lineage>
        <taxon>Eukaryota</taxon>
        <taxon>Metazoa</taxon>
        <taxon>Ecdysozoa</taxon>
        <taxon>Arthropoda</taxon>
        <taxon>Chelicerata</taxon>
        <taxon>Arachnida</taxon>
        <taxon>Araneae</taxon>
        <taxon>Mygalomorphae</taxon>
        <taxon>Theraphosidae</taxon>
        <taxon>Cyriopagopus</taxon>
    </lineage>
</organism>